<reference key="1">
    <citation type="journal article" date="2003" name="Mol. Microbiol.">
        <title>Genome-based analysis of virulence genes in a non-biofilm-forming Staphylococcus epidermidis strain (ATCC 12228).</title>
        <authorList>
            <person name="Zhang Y.-Q."/>
            <person name="Ren S.-X."/>
            <person name="Li H.-L."/>
            <person name="Wang Y.-X."/>
            <person name="Fu G."/>
            <person name="Yang J."/>
            <person name="Qin Z.-Q."/>
            <person name="Miao Y.-G."/>
            <person name="Wang W.-Y."/>
            <person name="Chen R.-S."/>
            <person name="Shen Y."/>
            <person name="Chen Z."/>
            <person name="Yuan Z.-H."/>
            <person name="Zhao G.-P."/>
            <person name="Qu D."/>
            <person name="Danchin A."/>
            <person name="Wen Y.-M."/>
        </authorList>
    </citation>
    <scope>NUCLEOTIDE SEQUENCE [LARGE SCALE GENOMIC DNA]</scope>
    <source>
        <strain>ATCC 12228 / FDA PCI 1200</strain>
    </source>
</reference>
<name>BIOD_STAES</name>
<accession>Q8CQD8</accession>
<comment type="function">
    <text evidence="1">Catalyzes a mechanistically unusual reaction, the ATP-dependent insertion of CO2 between the N7 and N8 nitrogen atoms of 7,8-diaminopelargonic acid (DAPA, also called 7,8-diammoniononanoate) to form a ureido ring.</text>
</comment>
<comment type="catalytic activity">
    <reaction evidence="1">
        <text>(7R,8S)-7,8-diammoniononanoate + CO2 + ATP = (4R,5S)-dethiobiotin + ADP + phosphate + 3 H(+)</text>
        <dbReference type="Rhea" id="RHEA:15805"/>
        <dbReference type="ChEBI" id="CHEBI:15378"/>
        <dbReference type="ChEBI" id="CHEBI:16526"/>
        <dbReference type="ChEBI" id="CHEBI:30616"/>
        <dbReference type="ChEBI" id="CHEBI:43474"/>
        <dbReference type="ChEBI" id="CHEBI:149469"/>
        <dbReference type="ChEBI" id="CHEBI:149473"/>
        <dbReference type="ChEBI" id="CHEBI:456216"/>
        <dbReference type="EC" id="6.3.3.3"/>
    </reaction>
</comment>
<comment type="cofactor">
    <cofactor evidence="1">
        <name>Mg(2+)</name>
        <dbReference type="ChEBI" id="CHEBI:18420"/>
    </cofactor>
</comment>
<comment type="pathway">
    <text evidence="1">Cofactor biosynthesis; biotin biosynthesis; biotin from 7,8-diaminononanoate: step 1/2.</text>
</comment>
<comment type="subunit">
    <text evidence="1">Homodimer.</text>
</comment>
<comment type="subcellular location">
    <subcellularLocation>
        <location evidence="1">Cytoplasm</location>
    </subcellularLocation>
</comment>
<comment type="similarity">
    <text evidence="1">Belongs to the dethiobiotin synthetase family.</text>
</comment>
<gene>
    <name evidence="1" type="primary">bioD</name>
    <name type="ordered locus">SE_0179</name>
</gene>
<keyword id="KW-0067">ATP-binding</keyword>
<keyword id="KW-0093">Biotin biosynthesis</keyword>
<keyword id="KW-0963">Cytoplasm</keyword>
<keyword id="KW-0436">Ligase</keyword>
<keyword id="KW-0460">Magnesium</keyword>
<keyword id="KW-0479">Metal-binding</keyword>
<keyword id="KW-0547">Nucleotide-binding</keyword>
<evidence type="ECO:0000255" key="1">
    <source>
        <dbReference type="HAMAP-Rule" id="MF_00336"/>
    </source>
</evidence>
<protein>
    <recommendedName>
        <fullName evidence="1">ATP-dependent dethiobiotin synthetase BioD</fullName>
        <ecNumber evidence="1">6.3.3.3</ecNumber>
    </recommendedName>
    <alternativeName>
        <fullName evidence="1">DTB synthetase</fullName>
        <shortName evidence="1">DTBS</shortName>
    </alternativeName>
    <alternativeName>
        <fullName evidence="1">Dethiobiotin synthase</fullName>
    </alternativeName>
</protein>
<feature type="chain" id="PRO_0000187989" description="ATP-dependent dethiobiotin synthetase BioD">
    <location>
        <begin position="1"/>
        <end position="223"/>
    </location>
</feature>
<feature type="active site" evidence="1">
    <location>
        <position position="36"/>
    </location>
</feature>
<feature type="binding site" evidence="1">
    <location>
        <begin position="11"/>
        <end position="16"/>
    </location>
    <ligand>
        <name>ATP</name>
        <dbReference type="ChEBI" id="CHEBI:30616"/>
    </ligand>
</feature>
<feature type="binding site" evidence="1">
    <location>
        <position position="15"/>
    </location>
    <ligand>
        <name>Mg(2+)</name>
        <dbReference type="ChEBI" id="CHEBI:18420"/>
    </ligand>
</feature>
<feature type="binding site" evidence="1">
    <location>
        <position position="40"/>
    </location>
    <ligand>
        <name>substrate</name>
    </ligand>
</feature>
<feature type="binding site" evidence="1">
    <location>
        <position position="50"/>
    </location>
    <ligand>
        <name>ATP</name>
        <dbReference type="ChEBI" id="CHEBI:30616"/>
    </ligand>
</feature>
<feature type="binding site" evidence="1">
    <location>
        <position position="50"/>
    </location>
    <ligand>
        <name>Mg(2+)</name>
        <dbReference type="ChEBI" id="CHEBI:18420"/>
    </ligand>
</feature>
<feature type="binding site" evidence="1">
    <location>
        <begin position="110"/>
        <end position="113"/>
    </location>
    <ligand>
        <name>ATP</name>
        <dbReference type="ChEBI" id="CHEBI:30616"/>
    </ligand>
</feature>
<feature type="binding site" evidence="1">
    <location>
        <position position="110"/>
    </location>
    <ligand>
        <name>Mg(2+)</name>
        <dbReference type="ChEBI" id="CHEBI:18420"/>
    </ligand>
</feature>
<feature type="binding site" evidence="1">
    <location>
        <begin position="174"/>
        <end position="175"/>
    </location>
    <ligand>
        <name>ATP</name>
        <dbReference type="ChEBI" id="CHEBI:30616"/>
    </ligand>
</feature>
<sequence length="223" mass="25453">MNIFVTGTNTDIGKTYVTKYLYKALRTRGYRVCIFKPFQTEEIGGGRYPDLEIYKNECDLDYDVTSLYTFKDPVSPHLAFKIERHQQLNHQTMIDKLESLKAQFDMILIEGAGGIAVPIYEYSDHFYMTTDLIKDTSDFIVSVLPSKLGAINDAIVHQKYIDHQELPPNVLIMNNYTDSAIEQDNLHTIEKLIHKSVYTLGHQATQESFSEAFIQRIIGGSNG</sequence>
<dbReference type="EC" id="6.3.3.3" evidence="1"/>
<dbReference type="EMBL" id="AE015929">
    <property type="protein sequence ID" value="AAO03776.1"/>
    <property type="molecule type" value="Genomic_DNA"/>
</dbReference>
<dbReference type="RefSeq" id="NP_763734.1">
    <property type="nucleotide sequence ID" value="NC_004461.1"/>
</dbReference>
<dbReference type="RefSeq" id="WP_002469267.1">
    <property type="nucleotide sequence ID" value="NZ_WBME01000051.1"/>
</dbReference>
<dbReference type="SMR" id="Q8CQD8"/>
<dbReference type="KEGG" id="sep:SE_0179"/>
<dbReference type="PATRIC" id="fig|176280.10.peg.162"/>
<dbReference type="eggNOG" id="COG0132">
    <property type="taxonomic scope" value="Bacteria"/>
</dbReference>
<dbReference type="HOGENOM" id="CLU_072551_3_0_9"/>
<dbReference type="OrthoDB" id="9802097at2"/>
<dbReference type="UniPathway" id="UPA00078">
    <property type="reaction ID" value="UER00161"/>
</dbReference>
<dbReference type="Proteomes" id="UP000001411">
    <property type="component" value="Chromosome"/>
</dbReference>
<dbReference type="GO" id="GO:0005829">
    <property type="term" value="C:cytosol"/>
    <property type="evidence" value="ECO:0007669"/>
    <property type="project" value="TreeGrafter"/>
</dbReference>
<dbReference type="GO" id="GO:0005524">
    <property type="term" value="F:ATP binding"/>
    <property type="evidence" value="ECO:0007669"/>
    <property type="project" value="UniProtKB-UniRule"/>
</dbReference>
<dbReference type="GO" id="GO:0004141">
    <property type="term" value="F:dethiobiotin synthase activity"/>
    <property type="evidence" value="ECO:0007669"/>
    <property type="project" value="UniProtKB-UniRule"/>
</dbReference>
<dbReference type="GO" id="GO:0000287">
    <property type="term" value="F:magnesium ion binding"/>
    <property type="evidence" value="ECO:0007669"/>
    <property type="project" value="UniProtKB-UniRule"/>
</dbReference>
<dbReference type="GO" id="GO:0009102">
    <property type="term" value="P:biotin biosynthetic process"/>
    <property type="evidence" value="ECO:0007669"/>
    <property type="project" value="UniProtKB-UniRule"/>
</dbReference>
<dbReference type="CDD" id="cd03109">
    <property type="entry name" value="DTBS"/>
    <property type="match status" value="1"/>
</dbReference>
<dbReference type="Gene3D" id="3.40.50.300">
    <property type="entry name" value="P-loop containing nucleotide triphosphate hydrolases"/>
    <property type="match status" value="1"/>
</dbReference>
<dbReference type="HAMAP" id="MF_00336">
    <property type="entry name" value="BioD"/>
    <property type="match status" value="1"/>
</dbReference>
<dbReference type="InterPro" id="IPR004472">
    <property type="entry name" value="DTB_synth_BioD"/>
</dbReference>
<dbReference type="InterPro" id="IPR027417">
    <property type="entry name" value="P-loop_NTPase"/>
</dbReference>
<dbReference type="NCBIfam" id="TIGR00347">
    <property type="entry name" value="bioD"/>
    <property type="match status" value="1"/>
</dbReference>
<dbReference type="PANTHER" id="PTHR43210:SF2">
    <property type="entry name" value="ATP-DEPENDENT DETHIOBIOTIN SYNTHETASE BIOD 2"/>
    <property type="match status" value="1"/>
</dbReference>
<dbReference type="PANTHER" id="PTHR43210">
    <property type="entry name" value="DETHIOBIOTIN SYNTHETASE"/>
    <property type="match status" value="1"/>
</dbReference>
<dbReference type="Pfam" id="PF13500">
    <property type="entry name" value="AAA_26"/>
    <property type="match status" value="1"/>
</dbReference>
<dbReference type="PIRSF" id="PIRSF006755">
    <property type="entry name" value="DTB_synth"/>
    <property type="match status" value="1"/>
</dbReference>
<dbReference type="SUPFAM" id="SSF52540">
    <property type="entry name" value="P-loop containing nucleoside triphosphate hydrolases"/>
    <property type="match status" value="1"/>
</dbReference>
<organism>
    <name type="scientific">Staphylococcus epidermidis (strain ATCC 12228 / FDA PCI 1200)</name>
    <dbReference type="NCBI Taxonomy" id="176280"/>
    <lineage>
        <taxon>Bacteria</taxon>
        <taxon>Bacillati</taxon>
        <taxon>Bacillota</taxon>
        <taxon>Bacilli</taxon>
        <taxon>Bacillales</taxon>
        <taxon>Staphylococcaceae</taxon>
        <taxon>Staphylococcus</taxon>
    </lineage>
</organism>
<proteinExistence type="inferred from homology"/>